<organism>
    <name type="scientific">Arabidopsis thaliana</name>
    <name type="common">Mouse-ear cress</name>
    <dbReference type="NCBI Taxonomy" id="3702"/>
    <lineage>
        <taxon>Eukaryota</taxon>
        <taxon>Viridiplantae</taxon>
        <taxon>Streptophyta</taxon>
        <taxon>Embryophyta</taxon>
        <taxon>Tracheophyta</taxon>
        <taxon>Spermatophyta</taxon>
        <taxon>Magnoliopsida</taxon>
        <taxon>eudicotyledons</taxon>
        <taxon>Gunneridae</taxon>
        <taxon>Pentapetalae</taxon>
        <taxon>rosids</taxon>
        <taxon>malvids</taxon>
        <taxon>Brassicales</taxon>
        <taxon>Brassicaceae</taxon>
        <taxon>Camelineae</taxon>
        <taxon>Arabidopsis</taxon>
    </lineage>
</organism>
<comment type="function">
    <text evidence="1">The phosphorylation of phosphatidylinositol (PI) to PI4P is the first committed step in the generation of phosphatidylinositol 4,5-bisphosphate (PIP2), a precursor of the second messenger inositol 1,4,5-trisphosphate (InsP3).</text>
</comment>
<comment type="catalytic activity">
    <reaction>
        <text>a 1,2-diacyl-sn-glycero-3-phospho-(1D-myo-inositol) + ATP = a 1,2-diacyl-sn-glycero-3-phospho-(1D-myo-inositol 4-phosphate) + ADP + H(+)</text>
        <dbReference type="Rhea" id="RHEA:19877"/>
        <dbReference type="ChEBI" id="CHEBI:15378"/>
        <dbReference type="ChEBI" id="CHEBI:30616"/>
        <dbReference type="ChEBI" id="CHEBI:57880"/>
        <dbReference type="ChEBI" id="CHEBI:58178"/>
        <dbReference type="ChEBI" id="CHEBI:456216"/>
        <dbReference type="EC" id="2.7.1.67"/>
    </reaction>
</comment>
<comment type="subunit">
    <text evidence="5">Interacts with AHK2.</text>
</comment>
<comment type="similarity">
    <text evidence="6">Belongs to the PI3/PI4-kinase family. Type II PI4K subfamily.</text>
</comment>
<dbReference type="EC" id="2.7.1.67"/>
<dbReference type="EMBL" id="AC079829">
    <property type="protein sequence ID" value="AAG50675.1"/>
    <property type="molecule type" value="Genomic_DNA"/>
</dbReference>
<dbReference type="EMBL" id="CP002684">
    <property type="protein sequence ID" value="AEE30670.1"/>
    <property type="molecule type" value="Genomic_DNA"/>
</dbReference>
<dbReference type="EMBL" id="AY035014">
    <property type="protein sequence ID" value="AAK59519.1"/>
    <property type="molecule type" value="mRNA"/>
</dbReference>
<dbReference type="EMBL" id="AY058170">
    <property type="protein sequence ID" value="AAL25584.1"/>
    <property type="molecule type" value="mRNA"/>
</dbReference>
<dbReference type="EMBL" id="AY075684">
    <property type="protein sequence ID" value="AAL77691.1"/>
    <property type="molecule type" value="mRNA"/>
</dbReference>
<dbReference type="PIR" id="A86389">
    <property type="entry name" value="A86389"/>
</dbReference>
<dbReference type="RefSeq" id="NP_564242.1">
    <property type="nucleotide sequence ID" value="NM_102391.3"/>
</dbReference>
<dbReference type="SMR" id="Q9C671"/>
<dbReference type="BioGRID" id="24405">
    <property type="interactions" value="1"/>
</dbReference>
<dbReference type="FunCoup" id="Q9C671">
    <property type="interactions" value="1"/>
</dbReference>
<dbReference type="IntAct" id="Q9C671">
    <property type="interactions" value="1"/>
</dbReference>
<dbReference type="STRING" id="3702.Q9C671"/>
<dbReference type="iPTMnet" id="Q9C671"/>
<dbReference type="PaxDb" id="3702-AT1G26270.1"/>
<dbReference type="ProteomicsDB" id="251346"/>
<dbReference type="EnsemblPlants" id="AT1G26270.1">
    <property type="protein sequence ID" value="AT1G26270.1"/>
    <property type="gene ID" value="AT1G26270"/>
</dbReference>
<dbReference type="GeneID" id="839168"/>
<dbReference type="Gramene" id="AT1G26270.1">
    <property type="protein sequence ID" value="AT1G26270.1"/>
    <property type="gene ID" value="AT1G26270"/>
</dbReference>
<dbReference type="KEGG" id="ath:AT1G26270"/>
<dbReference type="Araport" id="AT1G26270"/>
<dbReference type="TAIR" id="AT1G26270"/>
<dbReference type="eggNOG" id="KOG2381">
    <property type="taxonomic scope" value="Eukaryota"/>
</dbReference>
<dbReference type="HOGENOM" id="CLU_027241_1_1_1"/>
<dbReference type="InParanoid" id="Q9C671"/>
<dbReference type="OMA" id="DCEDDHE"/>
<dbReference type="PhylomeDB" id="Q9C671"/>
<dbReference type="PRO" id="PR:Q9C671"/>
<dbReference type="Proteomes" id="UP000006548">
    <property type="component" value="Chromosome 1"/>
</dbReference>
<dbReference type="ExpressionAtlas" id="Q9C671">
    <property type="expression patterns" value="baseline and differential"/>
</dbReference>
<dbReference type="GO" id="GO:0004430">
    <property type="term" value="F:1-phosphatidylinositol 4-kinase activity"/>
    <property type="evidence" value="ECO:0007669"/>
    <property type="project" value="UniProtKB-EC"/>
</dbReference>
<dbReference type="GO" id="GO:0005524">
    <property type="term" value="F:ATP binding"/>
    <property type="evidence" value="ECO:0007669"/>
    <property type="project" value="UniProtKB-KW"/>
</dbReference>
<dbReference type="GO" id="GO:0043424">
    <property type="term" value="F:protein histidine kinase binding"/>
    <property type="evidence" value="ECO:0000353"/>
    <property type="project" value="UniProtKB"/>
</dbReference>
<dbReference type="GO" id="GO:0071456">
    <property type="term" value="P:cellular response to hypoxia"/>
    <property type="evidence" value="ECO:0007007"/>
    <property type="project" value="TAIR"/>
</dbReference>
<dbReference type="CDD" id="cd17039">
    <property type="entry name" value="Ubl_ubiquitin_like"/>
    <property type="match status" value="1"/>
</dbReference>
<dbReference type="InterPro" id="IPR044571">
    <property type="entry name" value="P4KG1-8"/>
</dbReference>
<dbReference type="InterPro" id="IPR000403">
    <property type="entry name" value="PI3/4_kinase_cat_dom"/>
</dbReference>
<dbReference type="InterPro" id="IPR029071">
    <property type="entry name" value="Ubiquitin-like_domsf"/>
</dbReference>
<dbReference type="PANTHER" id="PTHR45800">
    <property type="entry name" value="PHOSPHATIDYLINOSITOL 4-KINASE GAMMA"/>
    <property type="match status" value="1"/>
</dbReference>
<dbReference type="PANTHER" id="PTHR45800:SF16">
    <property type="entry name" value="PHOSPHATIDYLINOSITOL 4-KINASE GAMMA 5"/>
    <property type="match status" value="1"/>
</dbReference>
<dbReference type="Pfam" id="PF00454">
    <property type="entry name" value="PI3_PI4_kinase"/>
    <property type="match status" value="1"/>
</dbReference>
<dbReference type="SUPFAM" id="SSF54236">
    <property type="entry name" value="Ubiquitin-like"/>
    <property type="match status" value="1"/>
</dbReference>
<dbReference type="PROSITE" id="PS50290">
    <property type="entry name" value="PI3_4_KINASE_3"/>
    <property type="match status" value="1"/>
</dbReference>
<proteinExistence type="evidence at protein level"/>
<gene>
    <name type="primary">PI4KG5</name>
    <name type="synonym">PI4KGAMMA5</name>
    <name type="ordered locus">At1g26270</name>
    <name type="ORF">F28B23.7</name>
</gene>
<accession>Q9C671</accession>
<protein>
    <recommendedName>
        <fullName>Phosphatidylinositol 4-kinase gamma 5</fullName>
        <shortName>AtPI4Kgamma5</shortName>
        <shortName>PI-4Kgamma5</shortName>
        <shortName>PI4K gamma 5</shortName>
        <ecNumber>2.7.1.67</ecNumber>
    </recommendedName>
</protein>
<reference key="1">
    <citation type="journal article" date="2000" name="Nature">
        <title>Sequence and analysis of chromosome 1 of the plant Arabidopsis thaliana.</title>
        <authorList>
            <person name="Theologis A."/>
            <person name="Ecker J.R."/>
            <person name="Palm C.J."/>
            <person name="Federspiel N.A."/>
            <person name="Kaul S."/>
            <person name="White O."/>
            <person name="Alonso J."/>
            <person name="Altafi H."/>
            <person name="Araujo R."/>
            <person name="Bowman C.L."/>
            <person name="Brooks S.Y."/>
            <person name="Buehler E."/>
            <person name="Chan A."/>
            <person name="Chao Q."/>
            <person name="Chen H."/>
            <person name="Cheuk R.F."/>
            <person name="Chin C.W."/>
            <person name="Chung M.K."/>
            <person name="Conn L."/>
            <person name="Conway A.B."/>
            <person name="Conway A.R."/>
            <person name="Creasy T.H."/>
            <person name="Dewar K."/>
            <person name="Dunn P."/>
            <person name="Etgu P."/>
            <person name="Feldblyum T.V."/>
            <person name="Feng J.-D."/>
            <person name="Fong B."/>
            <person name="Fujii C.Y."/>
            <person name="Gill J.E."/>
            <person name="Goldsmith A.D."/>
            <person name="Haas B."/>
            <person name="Hansen N.F."/>
            <person name="Hughes B."/>
            <person name="Huizar L."/>
            <person name="Hunter J.L."/>
            <person name="Jenkins J."/>
            <person name="Johnson-Hopson C."/>
            <person name="Khan S."/>
            <person name="Khaykin E."/>
            <person name="Kim C.J."/>
            <person name="Koo H.L."/>
            <person name="Kremenetskaia I."/>
            <person name="Kurtz D.B."/>
            <person name="Kwan A."/>
            <person name="Lam B."/>
            <person name="Langin-Hooper S."/>
            <person name="Lee A."/>
            <person name="Lee J.M."/>
            <person name="Lenz C.A."/>
            <person name="Li J.H."/>
            <person name="Li Y.-P."/>
            <person name="Lin X."/>
            <person name="Liu S.X."/>
            <person name="Liu Z.A."/>
            <person name="Luros J.S."/>
            <person name="Maiti R."/>
            <person name="Marziali A."/>
            <person name="Militscher J."/>
            <person name="Miranda M."/>
            <person name="Nguyen M."/>
            <person name="Nierman W.C."/>
            <person name="Osborne B.I."/>
            <person name="Pai G."/>
            <person name="Peterson J."/>
            <person name="Pham P.K."/>
            <person name="Rizzo M."/>
            <person name="Rooney T."/>
            <person name="Rowley D."/>
            <person name="Sakano H."/>
            <person name="Salzberg S.L."/>
            <person name="Schwartz J.R."/>
            <person name="Shinn P."/>
            <person name="Southwick A.M."/>
            <person name="Sun H."/>
            <person name="Tallon L.J."/>
            <person name="Tambunga G."/>
            <person name="Toriumi M.J."/>
            <person name="Town C.D."/>
            <person name="Utterback T."/>
            <person name="Van Aken S."/>
            <person name="Vaysberg M."/>
            <person name="Vysotskaia V.S."/>
            <person name="Walker M."/>
            <person name="Wu D."/>
            <person name="Yu G."/>
            <person name="Fraser C.M."/>
            <person name="Venter J.C."/>
            <person name="Davis R.W."/>
        </authorList>
    </citation>
    <scope>NUCLEOTIDE SEQUENCE [LARGE SCALE GENOMIC DNA]</scope>
    <source>
        <strain>cv. Columbia</strain>
    </source>
</reference>
<reference key="2">
    <citation type="journal article" date="2017" name="Plant J.">
        <title>Araport11: a complete reannotation of the Arabidopsis thaliana reference genome.</title>
        <authorList>
            <person name="Cheng C.Y."/>
            <person name="Krishnakumar V."/>
            <person name="Chan A.P."/>
            <person name="Thibaud-Nissen F."/>
            <person name="Schobel S."/>
            <person name="Town C.D."/>
        </authorList>
    </citation>
    <scope>GENOME REANNOTATION</scope>
    <source>
        <strain>cv. Columbia</strain>
    </source>
</reference>
<reference key="3">
    <citation type="journal article" date="2003" name="Science">
        <title>Empirical analysis of transcriptional activity in the Arabidopsis genome.</title>
        <authorList>
            <person name="Yamada K."/>
            <person name="Lim J."/>
            <person name="Dale J.M."/>
            <person name="Chen H."/>
            <person name="Shinn P."/>
            <person name="Palm C.J."/>
            <person name="Southwick A.M."/>
            <person name="Wu H.C."/>
            <person name="Kim C.J."/>
            <person name="Nguyen M."/>
            <person name="Pham P.K."/>
            <person name="Cheuk R.F."/>
            <person name="Karlin-Newmann G."/>
            <person name="Liu S.X."/>
            <person name="Lam B."/>
            <person name="Sakano H."/>
            <person name="Wu T."/>
            <person name="Yu G."/>
            <person name="Miranda M."/>
            <person name="Quach H.L."/>
            <person name="Tripp M."/>
            <person name="Chang C.H."/>
            <person name="Lee J.M."/>
            <person name="Toriumi M.J."/>
            <person name="Chan M.M."/>
            <person name="Tang C.C."/>
            <person name="Onodera C.S."/>
            <person name="Deng J.M."/>
            <person name="Akiyama K."/>
            <person name="Ansari Y."/>
            <person name="Arakawa T."/>
            <person name="Banh J."/>
            <person name="Banno F."/>
            <person name="Bowser L."/>
            <person name="Brooks S.Y."/>
            <person name="Carninci P."/>
            <person name="Chao Q."/>
            <person name="Choy N."/>
            <person name="Enju A."/>
            <person name="Goldsmith A.D."/>
            <person name="Gurjal M."/>
            <person name="Hansen N.F."/>
            <person name="Hayashizaki Y."/>
            <person name="Johnson-Hopson C."/>
            <person name="Hsuan V.W."/>
            <person name="Iida K."/>
            <person name="Karnes M."/>
            <person name="Khan S."/>
            <person name="Koesema E."/>
            <person name="Ishida J."/>
            <person name="Jiang P.X."/>
            <person name="Jones T."/>
            <person name="Kawai J."/>
            <person name="Kamiya A."/>
            <person name="Meyers C."/>
            <person name="Nakajima M."/>
            <person name="Narusaka M."/>
            <person name="Seki M."/>
            <person name="Sakurai T."/>
            <person name="Satou M."/>
            <person name="Tamse R."/>
            <person name="Vaysberg M."/>
            <person name="Wallender E.K."/>
            <person name="Wong C."/>
            <person name="Yamamura Y."/>
            <person name="Yuan S."/>
            <person name="Shinozaki K."/>
            <person name="Davis R.W."/>
            <person name="Theologis A."/>
            <person name="Ecker J.R."/>
        </authorList>
    </citation>
    <scope>NUCLEOTIDE SEQUENCE [LARGE SCALE MRNA]</scope>
    <source>
        <strain>cv. Columbia</strain>
    </source>
</reference>
<reference key="4">
    <citation type="journal article" date="2002" name="Plant Physiol.">
        <title>Inositol phospholipid metabolism in Arabidopsis. Characterized and putative isoforms of inositol phospholipid kinase and phosphoinositide-specific phospholipase C.</title>
        <authorList>
            <person name="Mueller-Roeber B."/>
            <person name="Pical C."/>
        </authorList>
    </citation>
    <scope>GENE FAMILY</scope>
    <scope>NOMENCLATURE</scope>
</reference>
<reference key="5">
    <citation type="journal article" date="2008" name="Biochem. J.">
        <title>Characterization of a new family of protein kinases from Arabidopsis containing phosphoinositide 3/4-kinase and ubiquitin-like domains.</title>
        <authorList>
            <person name="Galvao R.M."/>
            <person name="Kota U."/>
            <person name="Soderblom E.J."/>
            <person name="Goshe M.B."/>
            <person name="Boss W.F."/>
        </authorList>
    </citation>
    <scope>GENE FAMILY</scope>
</reference>
<reference key="6">
    <citation type="journal article" date="2008" name="J. Proteome Res.">
        <title>Toward an interaction map of the two-component signaling pathway of Arabidopsis thaliana.</title>
        <authorList>
            <person name="Dortay H."/>
            <person name="Gruhn N."/>
            <person name="Pfeifer A."/>
            <person name="Schwerdtner M."/>
            <person name="Schmuelling T."/>
            <person name="Heyl A."/>
        </authorList>
    </citation>
    <scope>INTERACTION WITH AHK2</scope>
</reference>
<reference key="7">
    <citation type="journal article" date="2009" name="J. Proteomics">
        <title>Phosphoproteomic analysis of nuclei-enriched fractions from Arabidopsis thaliana.</title>
        <authorList>
            <person name="Jones A.M.E."/>
            <person name="MacLean D."/>
            <person name="Studholme D.J."/>
            <person name="Serna-Sanz A."/>
            <person name="Andreasson E."/>
            <person name="Rathjen J.P."/>
            <person name="Peck S.C."/>
        </authorList>
    </citation>
    <scope>PHOSPHORYLATION [LARGE SCALE ANALYSIS] AT SER-571</scope>
    <scope>IDENTIFICATION BY MASS SPECTROMETRY [LARGE SCALE ANALYSIS]</scope>
    <source>
        <strain>cv. Columbia</strain>
    </source>
</reference>
<name>P4KG5_ARATH</name>
<evidence type="ECO:0000250" key="1"/>
<evidence type="ECO:0000250" key="2">
    <source>
        <dbReference type="UniProtKB" id="Q9BTU6"/>
    </source>
</evidence>
<evidence type="ECO:0000255" key="3">
    <source>
        <dbReference type="PROSITE-ProRule" id="PRU00269"/>
    </source>
</evidence>
<evidence type="ECO:0000256" key="4">
    <source>
        <dbReference type="SAM" id="MobiDB-lite"/>
    </source>
</evidence>
<evidence type="ECO:0000269" key="5">
    <source>
    </source>
</evidence>
<evidence type="ECO:0000305" key="6"/>
<evidence type="ECO:0007744" key="7">
    <source>
    </source>
</evidence>
<sequence>MSRKLDSPIKTQMAVALVKSPLNGEFREFNKVGMKTPVGRRRVFVQTETGCVLGLELDRSDNAHTVKRKLQVALNFPIEESSLTFGDLVLKNDLTAVRSDSPLLLTRNNFHRSSSTPCLSPMRADLQQRRDESSPIEILGNSVSFSFVRQMAKDITKAVKKGIDPVAVNSGLGGAYYFKNSRGESVAIVKPTDEEPYAPNNPKGFVGKALGQPGLKRSVRVGETGYREVAAYLLDKEHFANVPPTALVKITHSIFNVNDGVKASKPMEKMLVSKIASLQQFIPHDYDASEHGTSNFPVSAVHRIGILDIRILNTDRHSGNLLVKKLDGDGMFGQVELVPIDHGLCLPETLEDPYFEWIHWPQASIPFSEDELKYIANLDPLGDCEMLRRELPMVREASLRVLVLCTIFLKEAAANGLCLAEIGEMMTREVRPGDEEPSEIEVVCLEAMSLIGEKDAESPRSDLGNDIEFQFDIDCEEVTDCTKKLALPLGLTFGNARGQLSKVEETTEDGEEEEEEDREEEENDRADLEKMPTIKLSMSLKSTLLGEKSQKYQKHPGARVESAYASSAHRSADEQIPSSTSFVKLSDMSEEEWTIFLEKYQELLYPAIEKRKSITLGQKQRQRLGTSCQF</sequence>
<feature type="chain" id="PRO_0000398600" description="Phosphatidylinositol 4-kinase gamma 5">
    <location>
        <begin position="1"/>
        <end position="630"/>
    </location>
</feature>
<feature type="domain" description="Ubiquitin-like; degenerate">
    <location>
        <begin position="41"/>
        <end position="98"/>
    </location>
</feature>
<feature type="domain" description="PI3K/PI4K catalytic" evidence="3">
    <location>
        <begin position="162"/>
        <end position="459"/>
    </location>
</feature>
<feature type="region of interest" description="G-loop" evidence="3">
    <location>
        <begin position="168"/>
        <end position="174"/>
    </location>
</feature>
<feature type="region of interest" description="Catalytic loop" evidence="3">
    <location>
        <begin position="312"/>
        <end position="320"/>
    </location>
</feature>
<feature type="region of interest" description="Activation loop" evidence="3">
    <location>
        <begin position="339"/>
        <end position="365"/>
    </location>
</feature>
<feature type="region of interest" description="Disordered" evidence="4">
    <location>
        <begin position="500"/>
        <end position="527"/>
    </location>
</feature>
<feature type="compositionally biased region" description="Acidic residues" evidence="4">
    <location>
        <begin position="506"/>
        <end position="524"/>
    </location>
</feature>
<feature type="binding site" evidence="2">
    <location>
        <begin position="169"/>
        <end position="175"/>
    </location>
    <ligand>
        <name>ATP</name>
        <dbReference type="ChEBI" id="CHEBI:30616"/>
    </ligand>
</feature>
<feature type="binding site" evidence="2">
    <location>
        <position position="190"/>
    </location>
    <ligand>
        <name>ATP</name>
        <dbReference type="ChEBI" id="CHEBI:30616"/>
    </ligand>
</feature>
<feature type="binding site" evidence="2">
    <location>
        <begin position="279"/>
        <end position="282"/>
    </location>
    <ligand>
        <name>ATP</name>
        <dbReference type="ChEBI" id="CHEBI:30616"/>
    </ligand>
</feature>
<feature type="binding site" evidence="2">
    <location>
        <position position="341"/>
    </location>
    <ligand>
        <name>ATP</name>
        <dbReference type="ChEBI" id="CHEBI:30616"/>
    </ligand>
</feature>
<feature type="modified residue" description="Phosphoserine" evidence="7">
    <location>
        <position position="571"/>
    </location>
</feature>
<keyword id="KW-0067">ATP-binding</keyword>
<keyword id="KW-0418">Kinase</keyword>
<keyword id="KW-0547">Nucleotide-binding</keyword>
<keyword id="KW-0597">Phosphoprotein</keyword>
<keyword id="KW-1185">Reference proteome</keyword>
<keyword id="KW-0808">Transferase</keyword>